<organism>
    <name type="scientific">Schizosaccharomyces pombe (strain 972 / ATCC 24843)</name>
    <name type="common">Fission yeast</name>
    <dbReference type="NCBI Taxonomy" id="284812"/>
    <lineage>
        <taxon>Eukaryota</taxon>
        <taxon>Fungi</taxon>
        <taxon>Dikarya</taxon>
        <taxon>Ascomycota</taxon>
        <taxon>Taphrinomycotina</taxon>
        <taxon>Schizosaccharomycetes</taxon>
        <taxon>Schizosaccharomycetales</taxon>
        <taxon>Schizosaccharomycetaceae</taxon>
        <taxon>Schizosaccharomyces</taxon>
    </lineage>
</organism>
<protein>
    <recommendedName>
        <fullName>UPF0664 stress-induced protein C29B12.11c</fullName>
    </recommendedName>
</protein>
<accession>O14032</accession>
<evidence type="ECO:0000256" key="1">
    <source>
        <dbReference type="SAM" id="MobiDB-lite"/>
    </source>
</evidence>
<evidence type="ECO:0000269" key="2">
    <source>
    </source>
</evidence>
<evidence type="ECO:0000269" key="3">
    <source>
    </source>
</evidence>
<evidence type="ECO:0000305" key="4"/>
<proteinExistence type="evidence at transcript level"/>
<reference key="1">
    <citation type="journal article" date="2002" name="Nature">
        <title>The genome sequence of Schizosaccharomyces pombe.</title>
        <authorList>
            <person name="Wood V."/>
            <person name="Gwilliam R."/>
            <person name="Rajandream M.A."/>
            <person name="Lyne M.H."/>
            <person name="Lyne R."/>
            <person name="Stewart A."/>
            <person name="Sgouros J.G."/>
            <person name="Peat N."/>
            <person name="Hayles J."/>
            <person name="Baker S.G."/>
            <person name="Basham D."/>
            <person name="Bowman S."/>
            <person name="Brooks K."/>
            <person name="Brown D."/>
            <person name="Brown S."/>
            <person name="Chillingworth T."/>
            <person name="Churcher C.M."/>
            <person name="Collins M."/>
            <person name="Connor R."/>
            <person name="Cronin A."/>
            <person name="Davis P."/>
            <person name="Feltwell T."/>
            <person name="Fraser A."/>
            <person name="Gentles S."/>
            <person name="Goble A."/>
            <person name="Hamlin N."/>
            <person name="Harris D.E."/>
            <person name="Hidalgo J."/>
            <person name="Hodgson G."/>
            <person name="Holroyd S."/>
            <person name="Hornsby T."/>
            <person name="Howarth S."/>
            <person name="Huckle E.J."/>
            <person name="Hunt S."/>
            <person name="Jagels K."/>
            <person name="James K.D."/>
            <person name="Jones L."/>
            <person name="Jones M."/>
            <person name="Leather S."/>
            <person name="McDonald S."/>
            <person name="McLean J."/>
            <person name="Mooney P."/>
            <person name="Moule S."/>
            <person name="Mungall K.L."/>
            <person name="Murphy L.D."/>
            <person name="Niblett D."/>
            <person name="Odell C."/>
            <person name="Oliver K."/>
            <person name="O'Neil S."/>
            <person name="Pearson D."/>
            <person name="Quail M.A."/>
            <person name="Rabbinowitsch E."/>
            <person name="Rutherford K.M."/>
            <person name="Rutter S."/>
            <person name="Saunders D."/>
            <person name="Seeger K."/>
            <person name="Sharp S."/>
            <person name="Skelton J."/>
            <person name="Simmonds M.N."/>
            <person name="Squares R."/>
            <person name="Squares S."/>
            <person name="Stevens K."/>
            <person name="Taylor K."/>
            <person name="Taylor R.G."/>
            <person name="Tivey A."/>
            <person name="Walsh S.V."/>
            <person name="Warren T."/>
            <person name="Whitehead S."/>
            <person name="Woodward J.R."/>
            <person name="Volckaert G."/>
            <person name="Aert R."/>
            <person name="Robben J."/>
            <person name="Grymonprez B."/>
            <person name="Weltjens I."/>
            <person name="Vanstreels E."/>
            <person name="Rieger M."/>
            <person name="Schaefer M."/>
            <person name="Mueller-Auer S."/>
            <person name="Gabel C."/>
            <person name="Fuchs M."/>
            <person name="Duesterhoeft A."/>
            <person name="Fritzc C."/>
            <person name="Holzer E."/>
            <person name="Moestl D."/>
            <person name="Hilbert H."/>
            <person name="Borzym K."/>
            <person name="Langer I."/>
            <person name="Beck A."/>
            <person name="Lehrach H."/>
            <person name="Reinhardt R."/>
            <person name="Pohl T.M."/>
            <person name="Eger P."/>
            <person name="Zimmermann W."/>
            <person name="Wedler H."/>
            <person name="Wambutt R."/>
            <person name="Purnelle B."/>
            <person name="Goffeau A."/>
            <person name="Cadieu E."/>
            <person name="Dreano S."/>
            <person name="Gloux S."/>
            <person name="Lelaure V."/>
            <person name="Mottier S."/>
            <person name="Galibert F."/>
            <person name="Aves S.J."/>
            <person name="Xiang Z."/>
            <person name="Hunt C."/>
            <person name="Moore K."/>
            <person name="Hurst S.M."/>
            <person name="Lucas M."/>
            <person name="Rochet M."/>
            <person name="Gaillardin C."/>
            <person name="Tallada V.A."/>
            <person name="Garzon A."/>
            <person name="Thode G."/>
            <person name="Daga R.R."/>
            <person name="Cruzado L."/>
            <person name="Jimenez J."/>
            <person name="Sanchez M."/>
            <person name="del Rey F."/>
            <person name="Benito J."/>
            <person name="Dominguez A."/>
            <person name="Revuelta J.L."/>
            <person name="Moreno S."/>
            <person name="Armstrong J."/>
            <person name="Forsburg S.L."/>
            <person name="Cerutti L."/>
            <person name="Lowe T."/>
            <person name="McCombie W.R."/>
            <person name="Paulsen I."/>
            <person name="Potashkin J."/>
            <person name="Shpakovski G.V."/>
            <person name="Ussery D."/>
            <person name="Barrell B.G."/>
            <person name="Nurse P."/>
        </authorList>
    </citation>
    <scope>NUCLEOTIDE SEQUENCE [LARGE SCALE GENOMIC DNA]</scope>
    <source>
        <strain>972 / ATCC 24843</strain>
    </source>
</reference>
<reference key="2">
    <citation type="journal article" date="2003" name="Mol. Biol. Cell">
        <title>Global transcriptional responses of fission yeast to environmental stress.</title>
        <authorList>
            <person name="Chen D."/>
            <person name="Toone W.M."/>
            <person name="Mata J."/>
            <person name="Lyne R."/>
            <person name="Burns G."/>
            <person name="Kivinen K."/>
            <person name="Brazma A."/>
            <person name="Jones N."/>
            <person name="Baehler J."/>
        </authorList>
    </citation>
    <scope>INDUCTION</scope>
</reference>
<reference key="3">
    <citation type="journal article" date="2006" name="Nat. Biotechnol.">
        <title>ORFeome cloning and global analysis of protein localization in the fission yeast Schizosaccharomyces pombe.</title>
        <authorList>
            <person name="Matsuyama A."/>
            <person name="Arai R."/>
            <person name="Yashiroda Y."/>
            <person name="Shirai A."/>
            <person name="Kamata A."/>
            <person name="Sekido S."/>
            <person name="Kobayashi Y."/>
            <person name="Hashimoto A."/>
            <person name="Hamamoto M."/>
            <person name="Hiraoka Y."/>
            <person name="Horinouchi S."/>
            <person name="Yoshida M."/>
        </authorList>
    </citation>
    <scope>SUBCELLULAR LOCATION [LARGE SCALE ANALYSIS]</scope>
</reference>
<dbReference type="EMBL" id="CU329670">
    <property type="protein sequence ID" value="CAB16255.1"/>
    <property type="molecule type" value="Genomic_DNA"/>
</dbReference>
<dbReference type="PIR" id="T38498">
    <property type="entry name" value="T38498"/>
</dbReference>
<dbReference type="RefSeq" id="NP_594988.1">
    <property type="nucleotide sequence ID" value="NM_001020419.2"/>
</dbReference>
<dbReference type="SMR" id="O14032"/>
<dbReference type="BioGRID" id="279260">
    <property type="interactions" value="10"/>
</dbReference>
<dbReference type="FunCoup" id="O14032">
    <property type="interactions" value="301"/>
</dbReference>
<dbReference type="STRING" id="284812.O14032"/>
<dbReference type="iPTMnet" id="O14032"/>
<dbReference type="PaxDb" id="4896-SPAC29B12.11c.1"/>
<dbReference type="EnsemblFungi" id="SPAC29B12.11c.1">
    <property type="protein sequence ID" value="SPAC29B12.11c.1:pep"/>
    <property type="gene ID" value="SPAC29B12.11c"/>
</dbReference>
<dbReference type="KEGG" id="spo:2542813"/>
<dbReference type="PomBase" id="SPAC29B12.11c"/>
<dbReference type="VEuPathDB" id="FungiDB:SPAC29B12.11c"/>
<dbReference type="eggNOG" id="KOG3294">
    <property type="taxonomic scope" value="Eukaryota"/>
</dbReference>
<dbReference type="HOGENOM" id="CLU_066296_2_0_1"/>
<dbReference type="InParanoid" id="O14032"/>
<dbReference type="OMA" id="QFNEGGI"/>
<dbReference type="PhylomeDB" id="O14032"/>
<dbReference type="PRO" id="PR:O14032"/>
<dbReference type="Proteomes" id="UP000002485">
    <property type="component" value="Chromosome I"/>
</dbReference>
<dbReference type="GO" id="GO:0005829">
    <property type="term" value="C:cytosol"/>
    <property type="evidence" value="ECO:0007005"/>
    <property type="project" value="PomBase"/>
</dbReference>
<dbReference type="GO" id="GO:0005634">
    <property type="term" value="C:nucleus"/>
    <property type="evidence" value="ECO:0007005"/>
    <property type="project" value="PomBase"/>
</dbReference>
<dbReference type="GO" id="GO:0031490">
    <property type="term" value="F:chromatin DNA binding"/>
    <property type="evidence" value="ECO:0000318"/>
    <property type="project" value="GO_Central"/>
</dbReference>
<dbReference type="GO" id="GO:0003713">
    <property type="term" value="F:transcription coactivator activity"/>
    <property type="evidence" value="ECO:0000318"/>
    <property type="project" value="GO_Central"/>
</dbReference>
<dbReference type="GO" id="GO:0045893">
    <property type="term" value="P:positive regulation of DNA-templated transcription"/>
    <property type="evidence" value="ECO:0000318"/>
    <property type="project" value="GO_Central"/>
</dbReference>
<dbReference type="GO" id="GO:0045944">
    <property type="term" value="P:positive regulation of transcription by RNA polymerase II"/>
    <property type="evidence" value="ECO:0000250"/>
    <property type="project" value="PomBase"/>
</dbReference>
<dbReference type="CDD" id="cd13214">
    <property type="entry name" value="PH-GRAM_WBP2"/>
    <property type="match status" value="1"/>
</dbReference>
<dbReference type="InterPro" id="IPR044852">
    <property type="entry name" value="WBP2-like"/>
</dbReference>
<dbReference type="PANTHER" id="PTHR31606">
    <property type="entry name" value="WW DOMAIN BINDING PROTEIN 2, ISOFORM E"/>
    <property type="match status" value="1"/>
</dbReference>
<dbReference type="PANTHER" id="PTHR31606:SF1">
    <property type="entry name" value="WW DOMAIN BINDING PROTEIN 2, ISOFORM E"/>
    <property type="match status" value="1"/>
</dbReference>
<dbReference type="SUPFAM" id="SSF50729">
    <property type="entry name" value="PH domain-like"/>
    <property type="match status" value="1"/>
</dbReference>
<sequence>MSINWVTYKEGSESDILLLENECMFDCFDGVAISILCKPPSLKSWTCTKGLLCLTNQRLVYIAKDTDCDFKDFQSPVANLKDTKLNQPFFGANYYSGTVMPVPNGGIPCEAEVKLQFNEGGIFNFVEAWNRLIQRFQEVDSVSRVQHLDPLPPYHRPSSSQDQPPHYEEAVNKS</sequence>
<comment type="subcellular location">
    <subcellularLocation>
        <location evidence="3">Cytoplasm</location>
    </subcellularLocation>
    <subcellularLocation>
        <location evidence="3">Nucleus</location>
    </subcellularLocation>
</comment>
<comment type="induction">
    <text evidence="2">By stress.</text>
</comment>
<comment type="similarity">
    <text evidence="4">Belongs to the UPF0664 family.</text>
</comment>
<name>YEMB_SCHPO</name>
<keyword id="KW-0963">Cytoplasm</keyword>
<keyword id="KW-0539">Nucleus</keyword>
<keyword id="KW-1185">Reference proteome</keyword>
<feature type="chain" id="PRO_0000352830" description="UPF0664 stress-induced protein C29B12.11c">
    <location>
        <begin position="1"/>
        <end position="174"/>
    </location>
</feature>
<feature type="region of interest" description="Disordered" evidence="1">
    <location>
        <begin position="147"/>
        <end position="174"/>
    </location>
</feature>
<feature type="compositionally biased region" description="Basic and acidic residues" evidence="1">
    <location>
        <begin position="165"/>
        <end position="174"/>
    </location>
</feature>
<gene>
    <name type="ORF">SPAC29B12.11c</name>
</gene>